<name>PANB_DESHD</name>
<sequence length="278" mass="30173">MKTTKDFWVMKNEGKKIVMITAYDYPSAKQAEQAGADIILVGDSLGNVVLGYDSTVYVTMEDMIHHGKAAKRGAPNTFIVADMPFMSCHLSIRDTLLNGARLIQETGAQAVKVEGADEMIPHIKALVRAGIPVVSHLGLTPQTAAVLGGFKVQGKDGEAARKMLEDVKECQEAGAFALVLECIPKQLAQEISTTLTIPTIGIGAGVHTDGQVLVYHDILTYGVNRAPKFVKAYANADQLMLKGLQDYADEVRSMNFPDDEHSFTMKEEELKTLYGGRG</sequence>
<proteinExistence type="inferred from homology"/>
<comment type="function">
    <text evidence="1">Catalyzes the reversible reaction in which hydroxymethyl group from 5,10-methylenetetrahydrofolate is transferred onto alpha-ketoisovalerate to form ketopantoate.</text>
</comment>
<comment type="catalytic activity">
    <reaction evidence="1">
        <text>3-methyl-2-oxobutanoate + (6R)-5,10-methylene-5,6,7,8-tetrahydrofolate + H2O = 2-dehydropantoate + (6S)-5,6,7,8-tetrahydrofolate</text>
        <dbReference type="Rhea" id="RHEA:11824"/>
        <dbReference type="ChEBI" id="CHEBI:11561"/>
        <dbReference type="ChEBI" id="CHEBI:11851"/>
        <dbReference type="ChEBI" id="CHEBI:15377"/>
        <dbReference type="ChEBI" id="CHEBI:15636"/>
        <dbReference type="ChEBI" id="CHEBI:57453"/>
        <dbReference type="EC" id="2.1.2.11"/>
    </reaction>
</comment>
<comment type="cofactor">
    <cofactor evidence="1">
        <name>Mg(2+)</name>
        <dbReference type="ChEBI" id="CHEBI:18420"/>
    </cofactor>
    <text evidence="1">Binds 1 Mg(2+) ion per subunit.</text>
</comment>
<comment type="pathway">
    <text evidence="1">Cofactor biosynthesis; (R)-pantothenate biosynthesis; (R)-pantoate from 3-methyl-2-oxobutanoate: step 1/2.</text>
</comment>
<comment type="subunit">
    <text evidence="1">Homodecamer; pentamer of dimers.</text>
</comment>
<comment type="subcellular location">
    <subcellularLocation>
        <location evidence="1">Cytoplasm</location>
    </subcellularLocation>
</comment>
<comment type="similarity">
    <text evidence="1">Belongs to the PanB family.</text>
</comment>
<evidence type="ECO:0000255" key="1">
    <source>
        <dbReference type="HAMAP-Rule" id="MF_00156"/>
    </source>
</evidence>
<gene>
    <name evidence="1" type="primary">panB</name>
    <name type="ordered locus">Dhaf_0379</name>
</gene>
<keyword id="KW-0963">Cytoplasm</keyword>
<keyword id="KW-0460">Magnesium</keyword>
<keyword id="KW-0479">Metal-binding</keyword>
<keyword id="KW-0566">Pantothenate biosynthesis</keyword>
<keyword id="KW-0808">Transferase</keyword>
<feature type="chain" id="PRO_1000123379" description="3-methyl-2-oxobutanoate hydroxymethyltransferase">
    <location>
        <begin position="1"/>
        <end position="278"/>
    </location>
</feature>
<feature type="active site" description="Proton acceptor" evidence="1">
    <location>
        <position position="181"/>
    </location>
</feature>
<feature type="binding site" evidence="1">
    <location>
        <begin position="43"/>
        <end position="44"/>
    </location>
    <ligand>
        <name>3-methyl-2-oxobutanoate</name>
        <dbReference type="ChEBI" id="CHEBI:11851"/>
    </ligand>
</feature>
<feature type="binding site" evidence="1">
    <location>
        <position position="43"/>
    </location>
    <ligand>
        <name>Mg(2+)</name>
        <dbReference type="ChEBI" id="CHEBI:18420"/>
    </ligand>
</feature>
<feature type="binding site" evidence="1">
    <location>
        <position position="82"/>
    </location>
    <ligand>
        <name>3-methyl-2-oxobutanoate</name>
        <dbReference type="ChEBI" id="CHEBI:11851"/>
    </ligand>
</feature>
<feature type="binding site" evidence="1">
    <location>
        <position position="82"/>
    </location>
    <ligand>
        <name>Mg(2+)</name>
        <dbReference type="ChEBI" id="CHEBI:18420"/>
    </ligand>
</feature>
<feature type="binding site" evidence="1">
    <location>
        <position position="112"/>
    </location>
    <ligand>
        <name>3-methyl-2-oxobutanoate</name>
        <dbReference type="ChEBI" id="CHEBI:11851"/>
    </ligand>
</feature>
<feature type="binding site" evidence="1">
    <location>
        <position position="114"/>
    </location>
    <ligand>
        <name>Mg(2+)</name>
        <dbReference type="ChEBI" id="CHEBI:18420"/>
    </ligand>
</feature>
<protein>
    <recommendedName>
        <fullName evidence="1">3-methyl-2-oxobutanoate hydroxymethyltransferase</fullName>
        <ecNumber evidence="1">2.1.2.11</ecNumber>
    </recommendedName>
    <alternativeName>
        <fullName evidence="1">Ketopantoate hydroxymethyltransferase</fullName>
        <shortName evidence="1">KPHMT</shortName>
    </alternativeName>
</protein>
<organism>
    <name type="scientific">Desulfitobacterium hafniense (strain DSM 10664 / DCB-2)</name>
    <dbReference type="NCBI Taxonomy" id="272564"/>
    <lineage>
        <taxon>Bacteria</taxon>
        <taxon>Bacillati</taxon>
        <taxon>Bacillota</taxon>
        <taxon>Clostridia</taxon>
        <taxon>Eubacteriales</taxon>
        <taxon>Desulfitobacteriaceae</taxon>
        <taxon>Desulfitobacterium</taxon>
    </lineage>
</organism>
<dbReference type="EC" id="2.1.2.11" evidence="1"/>
<dbReference type="EMBL" id="CP001336">
    <property type="protein sequence ID" value="ACL18446.1"/>
    <property type="molecule type" value="Genomic_DNA"/>
</dbReference>
<dbReference type="RefSeq" id="WP_015942735.1">
    <property type="nucleotide sequence ID" value="NC_011830.1"/>
</dbReference>
<dbReference type="SMR" id="B8G1S3"/>
<dbReference type="KEGG" id="dhd:Dhaf_0379"/>
<dbReference type="HOGENOM" id="CLU_036645_1_0_9"/>
<dbReference type="UniPathway" id="UPA00028">
    <property type="reaction ID" value="UER00003"/>
</dbReference>
<dbReference type="Proteomes" id="UP000007726">
    <property type="component" value="Chromosome"/>
</dbReference>
<dbReference type="GO" id="GO:0005737">
    <property type="term" value="C:cytoplasm"/>
    <property type="evidence" value="ECO:0007669"/>
    <property type="project" value="UniProtKB-SubCell"/>
</dbReference>
<dbReference type="GO" id="GO:0003864">
    <property type="term" value="F:3-methyl-2-oxobutanoate hydroxymethyltransferase activity"/>
    <property type="evidence" value="ECO:0007669"/>
    <property type="project" value="UniProtKB-UniRule"/>
</dbReference>
<dbReference type="GO" id="GO:0000287">
    <property type="term" value="F:magnesium ion binding"/>
    <property type="evidence" value="ECO:0007669"/>
    <property type="project" value="TreeGrafter"/>
</dbReference>
<dbReference type="GO" id="GO:0015940">
    <property type="term" value="P:pantothenate biosynthetic process"/>
    <property type="evidence" value="ECO:0007669"/>
    <property type="project" value="UniProtKB-UniRule"/>
</dbReference>
<dbReference type="CDD" id="cd06557">
    <property type="entry name" value="KPHMT-like"/>
    <property type="match status" value="1"/>
</dbReference>
<dbReference type="FunFam" id="3.20.20.60:FF:000003">
    <property type="entry name" value="3-methyl-2-oxobutanoate hydroxymethyltransferase"/>
    <property type="match status" value="1"/>
</dbReference>
<dbReference type="Gene3D" id="3.20.20.60">
    <property type="entry name" value="Phosphoenolpyruvate-binding domains"/>
    <property type="match status" value="1"/>
</dbReference>
<dbReference type="HAMAP" id="MF_00156">
    <property type="entry name" value="PanB"/>
    <property type="match status" value="1"/>
</dbReference>
<dbReference type="InterPro" id="IPR003700">
    <property type="entry name" value="Pantoate_hydroxy_MeTrfase"/>
</dbReference>
<dbReference type="InterPro" id="IPR015813">
    <property type="entry name" value="Pyrv/PenolPyrv_kinase-like_dom"/>
</dbReference>
<dbReference type="InterPro" id="IPR040442">
    <property type="entry name" value="Pyrv_kinase-like_dom_sf"/>
</dbReference>
<dbReference type="NCBIfam" id="TIGR00222">
    <property type="entry name" value="panB"/>
    <property type="match status" value="1"/>
</dbReference>
<dbReference type="NCBIfam" id="NF001452">
    <property type="entry name" value="PRK00311.1"/>
    <property type="match status" value="1"/>
</dbReference>
<dbReference type="PANTHER" id="PTHR20881">
    <property type="entry name" value="3-METHYL-2-OXOBUTANOATE HYDROXYMETHYLTRANSFERASE"/>
    <property type="match status" value="1"/>
</dbReference>
<dbReference type="PANTHER" id="PTHR20881:SF0">
    <property type="entry name" value="3-METHYL-2-OXOBUTANOATE HYDROXYMETHYLTRANSFERASE"/>
    <property type="match status" value="1"/>
</dbReference>
<dbReference type="Pfam" id="PF02548">
    <property type="entry name" value="Pantoate_transf"/>
    <property type="match status" value="1"/>
</dbReference>
<dbReference type="PIRSF" id="PIRSF000388">
    <property type="entry name" value="Pantoate_hydroxy_MeTrfase"/>
    <property type="match status" value="1"/>
</dbReference>
<dbReference type="SUPFAM" id="SSF51621">
    <property type="entry name" value="Phosphoenolpyruvate/pyruvate domain"/>
    <property type="match status" value="1"/>
</dbReference>
<accession>B8G1S3</accession>
<reference key="1">
    <citation type="journal article" date="2012" name="BMC Microbiol.">
        <title>Genome sequence of Desulfitobacterium hafniense DCB-2, a Gram-positive anaerobe capable of dehalogenation and metal reduction.</title>
        <authorList>
            <person name="Kim S.H."/>
            <person name="Harzman C."/>
            <person name="Davis J.K."/>
            <person name="Hutcheson R."/>
            <person name="Broderick J.B."/>
            <person name="Marsh T.L."/>
            <person name="Tiedje J.M."/>
        </authorList>
    </citation>
    <scope>NUCLEOTIDE SEQUENCE [LARGE SCALE GENOMIC DNA]</scope>
    <source>
        <strain>DSM 10664 / DCB-2</strain>
    </source>
</reference>